<organism>
    <name type="scientific">Rhodopseudomonas palustris (strain ATCC BAA-98 / CGA009)</name>
    <dbReference type="NCBI Taxonomy" id="258594"/>
    <lineage>
        <taxon>Bacteria</taxon>
        <taxon>Pseudomonadati</taxon>
        <taxon>Pseudomonadota</taxon>
        <taxon>Alphaproteobacteria</taxon>
        <taxon>Hyphomicrobiales</taxon>
        <taxon>Nitrobacteraceae</taxon>
        <taxon>Rhodopseudomonas</taxon>
    </lineage>
</organism>
<proteinExistence type="evidence at protein level"/>
<name>RL23_RHOPA</name>
<reference key="1">
    <citation type="journal article" date="2004" name="Nat. Biotechnol.">
        <title>Complete genome sequence of the metabolically versatile photosynthetic bacterium Rhodopseudomonas palustris.</title>
        <authorList>
            <person name="Larimer F.W."/>
            <person name="Chain P."/>
            <person name="Hauser L."/>
            <person name="Lamerdin J.E."/>
            <person name="Malfatti S."/>
            <person name="Do L."/>
            <person name="Land M.L."/>
            <person name="Pelletier D.A."/>
            <person name="Beatty J.T."/>
            <person name="Lang A.S."/>
            <person name="Tabita F.R."/>
            <person name="Gibson J.L."/>
            <person name="Hanson T.E."/>
            <person name="Bobst C."/>
            <person name="Torres y Torres J.L."/>
            <person name="Peres C."/>
            <person name="Harrison F.H."/>
            <person name="Gibson J."/>
            <person name="Harwood C.S."/>
        </authorList>
    </citation>
    <scope>NUCLEOTIDE SEQUENCE [LARGE SCALE GENOMIC DNA]</scope>
    <source>
        <strain>ATCC BAA-98 / CGA009</strain>
    </source>
</reference>
<reference key="2">
    <citation type="journal article" date="2004" name="J. Proteome Res.">
        <title>Characterization of the 70S ribosome from Rhodopseudomonas palustris using an integrated 'top-down' and 'bottom-up' mass spectrometric approach.</title>
        <authorList>
            <person name="Strader M.B."/>
            <person name="VerBerkmoes N.C."/>
            <person name="Tabb D.L."/>
            <person name="Connelly H.M."/>
            <person name="Barton J.W."/>
            <person name="Bruce B.D."/>
            <person name="Pelletier D.A."/>
            <person name="Davison B.H."/>
            <person name="Hettich R.L."/>
            <person name="Larimer F.W."/>
            <person name="Hurst G.B."/>
        </authorList>
    </citation>
    <scope>MASS SPECTROMETRY</scope>
    <source>
        <strain>ATCC BAA-98 / CGA009</strain>
    </source>
</reference>
<sequence>MKSIDPRHYDVIVAPVVTEKSTMASEHNKVVFKVQGGATKPQIKEAVEKLFDVKVKSVNTLVRKGKTKAFRGTFGTQSDVKRAVVTLEEGHRIDVTTGL</sequence>
<keyword id="KW-0687">Ribonucleoprotein</keyword>
<keyword id="KW-0689">Ribosomal protein</keyword>
<keyword id="KW-0694">RNA-binding</keyword>
<keyword id="KW-0699">rRNA-binding</keyword>
<protein>
    <recommendedName>
        <fullName evidence="2">Large ribosomal subunit protein uL23</fullName>
    </recommendedName>
    <alternativeName>
        <fullName evidence="4">50S ribosomal protein L23</fullName>
    </alternativeName>
    <alternativeName>
        <fullName>RRP-L23</fullName>
    </alternativeName>
</protein>
<gene>
    <name evidence="2" type="primary">rplW</name>
    <name type="ordered locus">RPA3248</name>
</gene>
<dbReference type="EMBL" id="BX572603">
    <property type="protein sequence ID" value="CAE28689.1"/>
    <property type="molecule type" value="Genomic_DNA"/>
</dbReference>
<dbReference type="RefSeq" id="WP_011158793.1">
    <property type="nucleotide sequence ID" value="NZ_CP116810.1"/>
</dbReference>
<dbReference type="SMR" id="Q6N4T7"/>
<dbReference type="IntAct" id="Q6N4T7">
    <property type="interactions" value="1"/>
</dbReference>
<dbReference type="STRING" id="258594.RPA3248"/>
<dbReference type="eggNOG" id="COG0089">
    <property type="taxonomic scope" value="Bacteria"/>
</dbReference>
<dbReference type="HOGENOM" id="CLU_037562_3_1_5"/>
<dbReference type="PhylomeDB" id="Q6N4T7"/>
<dbReference type="GO" id="GO:1990904">
    <property type="term" value="C:ribonucleoprotein complex"/>
    <property type="evidence" value="ECO:0007669"/>
    <property type="project" value="UniProtKB-KW"/>
</dbReference>
<dbReference type="GO" id="GO:0005840">
    <property type="term" value="C:ribosome"/>
    <property type="evidence" value="ECO:0007669"/>
    <property type="project" value="UniProtKB-KW"/>
</dbReference>
<dbReference type="GO" id="GO:0019843">
    <property type="term" value="F:rRNA binding"/>
    <property type="evidence" value="ECO:0007669"/>
    <property type="project" value="UniProtKB-UniRule"/>
</dbReference>
<dbReference type="GO" id="GO:0003735">
    <property type="term" value="F:structural constituent of ribosome"/>
    <property type="evidence" value="ECO:0007669"/>
    <property type="project" value="InterPro"/>
</dbReference>
<dbReference type="GO" id="GO:0006412">
    <property type="term" value="P:translation"/>
    <property type="evidence" value="ECO:0007669"/>
    <property type="project" value="UniProtKB-UniRule"/>
</dbReference>
<dbReference type="FunFam" id="3.30.70.330:FF:000001">
    <property type="entry name" value="50S ribosomal protein L23"/>
    <property type="match status" value="1"/>
</dbReference>
<dbReference type="Gene3D" id="3.30.70.330">
    <property type="match status" value="1"/>
</dbReference>
<dbReference type="HAMAP" id="MF_01369_B">
    <property type="entry name" value="Ribosomal_uL23_B"/>
    <property type="match status" value="1"/>
</dbReference>
<dbReference type="InterPro" id="IPR012677">
    <property type="entry name" value="Nucleotide-bd_a/b_plait_sf"/>
</dbReference>
<dbReference type="InterPro" id="IPR013025">
    <property type="entry name" value="Ribosomal_uL23-like"/>
</dbReference>
<dbReference type="InterPro" id="IPR012678">
    <property type="entry name" value="Ribosomal_uL23/eL15/eS24_sf"/>
</dbReference>
<dbReference type="InterPro" id="IPR001014">
    <property type="entry name" value="Ribosomal_uL23_CS"/>
</dbReference>
<dbReference type="NCBIfam" id="NF004359">
    <property type="entry name" value="PRK05738.1-3"/>
    <property type="match status" value="1"/>
</dbReference>
<dbReference type="NCBIfam" id="NF004360">
    <property type="entry name" value="PRK05738.1-5"/>
    <property type="match status" value="1"/>
</dbReference>
<dbReference type="NCBIfam" id="NF004363">
    <property type="entry name" value="PRK05738.2-4"/>
    <property type="match status" value="1"/>
</dbReference>
<dbReference type="PANTHER" id="PTHR11620">
    <property type="entry name" value="60S RIBOSOMAL PROTEIN L23A"/>
    <property type="match status" value="1"/>
</dbReference>
<dbReference type="Pfam" id="PF00276">
    <property type="entry name" value="Ribosomal_L23"/>
    <property type="match status" value="1"/>
</dbReference>
<dbReference type="SUPFAM" id="SSF54189">
    <property type="entry name" value="Ribosomal proteins S24e, L23 and L15e"/>
    <property type="match status" value="1"/>
</dbReference>
<dbReference type="PROSITE" id="PS00050">
    <property type="entry name" value="RIBOSOMAL_L23"/>
    <property type="match status" value="1"/>
</dbReference>
<evidence type="ECO:0000250" key="1"/>
<evidence type="ECO:0000255" key="2">
    <source>
        <dbReference type="HAMAP-Rule" id="MF_01369"/>
    </source>
</evidence>
<evidence type="ECO:0000269" key="3">
    <source>
    </source>
</evidence>
<evidence type="ECO:0000305" key="4"/>
<accession>Q6N4T7</accession>
<comment type="function">
    <text evidence="2">One of the early assembly proteins it binds 23S rRNA. One of the proteins that surrounds the polypeptide exit tunnel on the outside of the ribosome. Forms the main docking site for trigger factor binding to the ribosome.</text>
</comment>
<comment type="subunit">
    <text evidence="1">Contacts protein L29, and trigger factor when it is bound to the ribosome (By similarity). Part of the 50S ribosomal subunit.</text>
</comment>
<comment type="mass spectrometry"/>
<comment type="similarity">
    <text evidence="2">Belongs to the universal ribosomal protein uL23 family.</text>
</comment>
<feature type="chain" id="PRO_0000224169" description="Large ribosomal subunit protein uL23">
    <location>
        <begin position="1"/>
        <end position="99"/>
    </location>
</feature>